<sequence>MNSLLMITACFFLIGTVWAKEGYLVNKSTGCKYGCLLLGKNEGCDKECKAKNQGGSYGYCYAFGCWCEGLPESTPTYPLPNKSCSKK</sequence>
<proteinExistence type="evidence at protein level"/>
<organism>
    <name type="scientific">Centruroides suffusus</name>
    <name type="common">Durango bark scorpion</name>
    <dbReference type="NCBI Taxonomy" id="6880"/>
    <lineage>
        <taxon>Eukaryota</taxon>
        <taxon>Metazoa</taxon>
        <taxon>Ecdysozoa</taxon>
        <taxon>Arthropoda</taxon>
        <taxon>Chelicerata</taxon>
        <taxon>Arachnida</taxon>
        <taxon>Scorpiones</taxon>
        <taxon>Buthida</taxon>
        <taxon>Buthoidea</taxon>
        <taxon>Buthidae</taxon>
        <taxon>Centruroides</taxon>
    </lineage>
</organism>
<keyword id="KW-0165">Cleavage on pair of basic residues</keyword>
<keyword id="KW-0903">Direct protein sequencing</keyword>
<keyword id="KW-1015">Disulfide bond</keyword>
<keyword id="KW-0872">Ion channel impairing toxin</keyword>
<keyword id="KW-0528">Neurotoxin</keyword>
<keyword id="KW-0964">Secreted</keyword>
<keyword id="KW-0732">Signal</keyword>
<keyword id="KW-0800">Toxin</keyword>
<keyword id="KW-0738">Voltage-gated sodium channel impairing toxin</keyword>
<dbReference type="EMBL" id="AM981271">
    <property type="protein sequence ID" value="CAQ37795.1"/>
    <property type="molecule type" value="mRNA"/>
</dbReference>
<dbReference type="SMR" id="B7FDP2"/>
<dbReference type="GO" id="GO:0005576">
    <property type="term" value="C:extracellular region"/>
    <property type="evidence" value="ECO:0000314"/>
    <property type="project" value="UniProtKB"/>
</dbReference>
<dbReference type="GO" id="GO:0019871">
    <property type="term" value="F:sodium channel inhibitor activity"/>
    <property type="evidence" value="ECO:0000303"/>
    <property type="project" value="UniProtKB"/>
</dbReference>
<dbReference type="GO" id="GO:0090729">
    <property type="term" value="F:toxin activity"/>
    <property type="evidence" value="ECO:0000314"/>
    <property type="project" value="UniProtKB"/>
</dbReference>
<dbReference type="GO" id="GO:0006952">
    <property type="term" value="P:defense response"/>
    <property type="evidence" value="ECO:0007669"/>
    <property type="project" value="InterPro"/>
</dbReference>
<dbReference type="CDD" id="cd23106">
    <property type="entry name" value="neurotoxins_LC_scorpion"/>
    <property type="match status" value="1"/>
</dbReference>
<dbReference type="FunFam" id="3.30.30.10:FF:000002">
    <property type="entry name" value="Alpha-like toxin BmK-M1"/>
    <property type="match status" value="1"/>
</dbReference>
<dbReference type="Gene3D" id="3.30.30.10">
    <property type="entry name" value="Knottin, scorpion toxin-like"/>
    <property type="match status" value="1"/>
</dbReference>
<dbReference type="InterPro" id="IPR044062">
    <property type="entry name" value="LCN-type_CS_alpha_beta_dom"/>
</dbReference>
<dbReference type="InterPro" id="IPR003614">
    <property type="entry name" value="Scorpion_toxin-like"/>
</dbReference>
<dbReference type="InterPro" id="IPR036574">
    <property type="entry name" value="Scorpion_toxin-like_sf"/>
</dbReference>
<dbReference type="InterPro" id="IPR018218">
    <property type="entry name" value="Scorpion_toxinL"/>
</dbReference>
<dbReference type="InterPro" id="IPR002061">
    <property type="entry name" value="Scorpion_toxinL/defensin"/>
</dbReference>
<dbReference type="Pfam" id="PF00537">
    <property type="entry name" value="Toxin_3"/>
    <property type="match status" value="1"/>
</dbReference>
<dbReference type="PRINTS" id="PR00285">
    <property type="entry name" value="SCORPNTOXIN"/>
</dbReference>
<dbReference type="SMART" id="SM00505">
    <property type="entry name" value="Knot1"/>
    <property type="match status" value="1"/>
</dbReference>
<dbReference type="SUPFAM" id="SSF57095">
    <property type="entry name" value="Scorpion toxin-like"/>
    <property type="match status" value="1"/>
</dbReference>
<dbReference type="PROSITE" id="PS51863">
    <property type="entry name" value="LCN_CSAB"/>
    <property type="match status" value="1"/>
</dbReference>
<feature type="signal peptide" evidence="2">
    <location>
        <begin position="1"/>
        <end position="19"/>
    </location>
</feature>
<feature type="chain" id="PRO_5000417205" description="Toxin Css39.8">
    <location>
        <begin position="20"/>
        <end position="85"/>
    </location>
</feature>
<feature type="domain" description="LCN-type CS-alpha/beta" evidence="1">
    <location>
        <begin position="20"/>
        <end position="85"/>
    </location>
</feature>
<feature type="disulfide bond" evidence="1 2">
    <location>
        <begin position="31"/>
        <end position="84"/>
    </location>
</feature>
<feature type="disulfide bond" evidence="1 2">
    <location>
        <begin position="35"/>
        <end position="60"/>
    </location>
</feature>
<feature type="disulfide bond" evidence="1 2">
    <location>
        <begin position="44"/>
        <end position="65"/>
    </location>
</feature>
<feature type="disulfide bond" evidence="1 2">
    <location>
        <begin position="48"/>
        <end position="67"/>
    </location>
</feature>
<comment type="function">
    <text evidence="2">Beta toxins bind voltage-independently at site-4 of sodium channels (Nav) and shift the voltage of activation toward more negative potentials thereby affecting sodium channel activation and promoting spontaneous and repetitive firing. This toxin is lethal to crustaceans (freshwater crayfish (Cambarellus montezumae spp.)), it provokes a reversible paralysis to insects (crickets (Achaeta spp.)), but is not toxic to mice. At high concentrations, it does displace the (beta) mammal-specific toxin Cn2 from rat brain synaptosomes.</text>
</comment>
<comment type="subcellular location">
    <subcellularLocation>
        <location evidence="2">Secreted</location>
    </subcellularLocation>
</comment>
<comment type="tissue specificity">
    <text evidence="2">Expressed by the venom gland.</text>
</comment>
<comment type="domain">
    <text evidence="3">Has the structural arrangement of an alpha-helix connected to antiparallel beta-sheets by disulfide bonds (CS-alpha/beta).</text>
</comment>
<comment type="mass spectrometry"/>
<comment type="toxic dose">
    <text evidence="2">LD(50) is 28.5 mg/g body weight of crayfish.</text>
</comment>
<comment type="similarity">
    <text evidence="3">Belongs to the long (4 C-C) scorpion toxin superfamily. Sodium channel inhibitor family. Beta subfamily.</text>
</comment>
<accession>B7FDP2</accession>
<accession>P85522</accession>
<reference key="1">
    <citation type="journal article" date="2009" name="Biochim. Biophys. Acta">
        <title>Solution structure of Cn5, a crustacean toxin found in the venom of the scorpions Centruroides noxius and Centruroides suffusus suffusus.</title>
        <authorList>
            <person name="Corzo G."/>
            <person name="Prochnicka-Chalufour A."/>
            <person name="Garcia B.I."/>
            <person name="Possani L.D."/>
            <person name="Delepierre M."/>
        </authorList>
    </citation>
    <scope>NUCLEOTIDE SEQUENCE [MRNA]</scope>
    <scope>PROTEIN SEQUENCE OF 20-85</scope>
    <scope>STRUCTURE BY NMR OF 20-85</scope>
    <scope>FUNCTION</scope>
    <scope>SUBCELLULAR LOCATION</scope>
    <scope>TISSUE SPECIFICITY</scope>
    <scope>MASS SPECTROMETRY</scope>
    <scope>TOXIC DOSE</scope>
    <scope>DISULFIDE BONDS</scope>
    <source>
        <tissue>Venom</tissue>
        <tissue>Venom gland</tissue>
    </source>
</reference>
<protein>
    <recommendedName>
        <fullName>Toxin Css39.8</fullName>
    </recommendedName>
</protein>
<evidence type="ECO:0000255" key="1">
    <source>
        <dbReference type="PROSITE-ProRule" id="PRU01210"/>
    </source>
</evidence>
<evidence type="ECO:0000269" key="2">
    <source>
    </source>
</evidence>
<evidence type="ECO:0000305" key="3"/>
<name>SCX39_CENSU</name>